<gene>
    <name evidence="1" type="primary">thiG</name>
    <name type="ordered locus">jk0850</name>
</gene>
<protein>
    <recommendedName>
        <fullName evidence="1">Thiazole synthase</fullName>
        <ecNumber evidence="1">2.8.1.10</ecNumber>
    </recommendedName>
</protein>
<keyword id="KW-0963">Cytoplasm</keyword>
<keyword id="KW-1185">Reference proteome</keyword>
<keyword id="KW-0704">Schiff base</keyword>
<keyword id="KW-0784">Thiamine biosynthesis</keyword>
<keyword id="KW-0808">Transferase</keyword>
<dbReference type="EC" id="2.8.1.10" evidence="1"/>
<dbReference type="EMBL" id="CR931997">
    <property type="protein sequence ID" value="CAI37012.1"/>
    <property type="molecule type" value="Genomic_DNA"/>
</dbReference>
<dbReference type="RefSeq" id="WP_011273448.1">
    <property type="nucleotide sequence ID" value="NC_007164.1"/>
</dbReference>
<dbReference type="SMR" id="Q4JVZ5"/>
<dbReference type="STRING" id="306537.jk0850"/>
<dbReference type="GeneID" id="92738374"/>
<dbReference type="KEGG" id="cjk:jk0850"/>
<dbReference type="PATRIC" id="fig|306537.10.peg.861"/>
<dbReference type="eggNOG" id="COG2022">
    <property type="taxonomic scope" value="Bacteria"/>
</dbReference>
<dbReference type="HOGENOM" id="CLU_062233_1_0_11"/>
<dbReference type="OrthoDB" id="9805935at2"/>
<dbReference type="UniPathway" id="UPA00060"/>
<dbReference type="Proteomes" id="UP000000545">
    <property type="component" value="Chromosome"/>
</dbReference>
<dbReference type="GO" id="GO:0005737">
    <property type="term" value="C:cytoplasm"/>
    <property type="evidence" value="ECO:0007669"/>
    <property type="project" value="UniProtKB-SubCell"/>
</dbReference>
<dbReference type="GO" id="GO:1990107">
    <property type="term" value="F:thiazole synthase activity"/>
    <property type="evidence" value="ECO:0007669"/>
    <property type="project" value="UniProtKB-EC"/>
</dbReference>
<dbReference type="GO" id="GO:0009229">
    <property type="term" value="P:thiamine diphosphate biosynthetic process"/>
    <property type="evidence" value="ECO:0007669"/>
    <property type="project" value="UniProtKB-UniRule"/>
</dbReference>
<dbReference type="CDD" id="cd04728">
    <property type="entry name" value="ThiG"/>
    <property type="match status" value="1"/>
</dbReference>
<dbReference type="Gene3D" id="3.20.20.70">
    <property type="entry name" value="Aldolase class I"/>
    <property type="match status" value="1"/>
</dbReference>
<dbReference type="HAMAP" id="MF_00443">
    <property type="entry name" value="ThiG"/>
    <property type="match status" value="1"/>
</dbReference>
<dbReference type="InterPro" id="IPR013785">
    <property type="entry name" value="Aldolase_TIM"/>
</dbReference>
<dbReference type="InterPro" id="IPR033983">
    <property type="entry name" value="Thiazole_synthase_ThiG"/>
</dbReference>
<dbReference type="InterPro" id="IPR008867">
    <property type="entry name" value="ThiG"/>
</dbReference>
<dbReference type="PANTHER" id="PTHR34266">
    <property type="entry name" value="THIAZOLE SYNTHASE"/>
    <property type="match status" value="1"/>
</dbReference>
<dbReference type="PANTHER" id="PTHR34266:SF2">
    <property type="entry name" value="THIAZOLE SYNTHASE"/>
    <property type="match status" value="1"/>
</dbReference>
<dbReference type="Pfam" id="PF05690">
    <property type="entry name" value="ThiG"/>
    <property type="match status" value="1"/>
</dbReference>
<dbReference type="SUPFAM" id="SSF110399">
    <property type="entry name" value="ThiG-like"/>
    <property type="match status" value="1"/>
</dbReference>
<proteinExistence type="inferred from homology"/>
<organism>
    <name type="scientific">Corynebacterium jeikeium (strain K411)</name>
    <dbReference type="NCBI Taxonomy" id="306537"/>
    <lineage>
        <taxon>Bacteria</taxon>
        <taxon>Bacillati</taxon>
        <taxon>Actinomycetota</taxon>
        <taxon>Actinomycetes</taxon>
        <taxon>Mycobacteriales</taxon>
        <taxon>Corynebacteriaceae</taxon>
        <taxon>Corynebacterium</taxon>
    </lineage>
</organism>
<comment type="function">
    <text evidence="1">Catalyzes the rearrangement of 1-deoxy-D-xylulose 5-phosphate (DXP) to produce the thiazole phosphate moiety of thiamine. Sulfur is provided by the thiocarboxylate moiety of the carrier protein ThiS. In vitro, sulfur can be provided by H(2)S.</text>
</comment>
<comment type="catalytic activity">
    <reaction evidence="1">
        <text>[ThiS sulfur-carrier protein]-C-terminal-Gly-aminoethanethioate + 2-iminoacetate + 1-deoxy-D-xylulose 5-phosphate = [ThiS sulfur-carrier protein]-C-terminal Gly-Gly + 2-[(2R,5Z)-2-carboxy-4-methylthiazol-5(2H)-ylidene]ethyl phosphate + 2 H2O + H(+)</text>
        <dbReference type="Rhea" id="RHEA:26297"/>
        <dbReference type="Rhea" id="RHEA-COMP:12909"/>
        <dbReference type="Rhea" id="RHEA-COMP:19908"/>
        <dbReference type="ChEBI" id="CHEBI:15377"/>
        <dbReference type="ChEBI" id="CHEBI:15378"/>
        <dbReference type="ChEBI" id="CHEBI:57792"/>
        <dbReference type="ChEBI" id="CHEBI:62899"/>
        <dbReference type="ChEBI" id="CHEBI:77846"/>
        <dbReference type="ChEBI" id="CHEBI:90778"/>
        <dbReference type="ChEBI" id="CHEBI:232372"/>
        <dbReference type="EC" id="2.8.1.10"/>
    </reaction>
</comment>
<comment type="pathway">
    <text evidence="1">Cofactor biosynthesis; thiamine diphosphate biosynthesis.</text>
</comment>
<comment type="subunit">
    <text evidence="1">Homotetramer. Forms heterodimers with either ThiH or ThiS.</text>
</comment>
<comment type="subcellular location">
    <subcellularLocation>
        <location evidence="1">Cytoplasm</location>
    </subcellularLocation>
</comment>
<comment type="similarity">
    <text evidence="1">Belongs to the ThiG family.</text>
</comment>
<evidence type="ECO:0000255" key="1">
    <source>
        <dbReference type="HAMAP-Rule" id="MF_00443"/>
    </source>
</evidence>
<name>THIG_CORJK</name>
<sequence length="278" mass="28561">MLEIAGKKFDSHLIMGTGGATSQTLLEKALVASGTQLTTVAMRRFRAGNTPSTAGASNGAAGGESVFGLLNRLGIDVLPNTAGCRTAKDAILTAQLAREALGTNWVKLELIADDRTLLPDVVELVDTCEMLVANGFEVLAYTSDDPVVAKRLEDAGAAAVMPLGSPIGTGLGILNPHNIELICARASVPVLLDAGVGTTSDAALAMELGCSGVLLASAVNRCQDPVAMATAMRHAVEAGRLAAAAGRIPKRTHAQGALASSSFEGLASWDEDWAEEVL</sequence>
<accession>Q4JVZ5</accession>
<reference key="1">
    <citation type="journal article" date="2005" name="J. Bacteriol.">
        <title>Complete genome sequence and analysis of the multiresistant nosocomial pathogen Corynebacterium jeikeium K411, a lipid-requiring bacterium of the human skin flora.</title>
        <authorList>
            <person name="Tauch A."/>
            <person name="Kaiser O."/>
            <person name="Hain T."/>
            <person name="Goesmann A."/>
            <person name="Weisshaar B."/>
            <person name="Albersmeier A."/>
            <person name="Bekel T."/>
            <person name="Bischoff N."/>
            <person name="Brune I."/>
            <person name="Chakraborty T."/>
            <person name="Kalinowski J."/>
            <person name="Meyer F."/>
            <person name="Rupp O."/>
            <person name="Schneiker S."/>
            <person name="Viehoever P."/>
            <person name="Puehler A."/>
        </authorList>
    </citation>
    <scope>NUCLEOTIDE SEQUENCE [LARGE SCALE GENOMIC DNA]</scope>
    <source>
        <strain>K411</strain>
    </source>
</reference>
<feature type="chain" id="PRO_0000236337" description="Thiazole synthase">
    <location>
        <begin position="1"/>
        <end position="278"/>
    </location>
</feature>
<feature type="active site" description="Schiff-base intermediate with DXP" evidence="1">
    <location>
        <position position="107"/>
    </location>
</feature>
<feature type="binding site" evidence="1">
    <location>
        <position position="168"/>
    </location>
    <ligand>
        <name>1-deoxy-D-xylulose 5-phosphate</name>
        <dbReference type="ChEBI" id="CHEBI:57792"/>
    </ligand>
</feature>
<feature type="binding site" evidence="1">
    <location>
        <begin position="194"/>
        <end position="195"/>
    </location>
    <ligand>
        <name>1-deoxy-D-xylulose 5-phosphate</name>
        <dbReference type="ChEBI" id="CHEBI:57792"/>
    </ligand>
</feature>
<feature type="binding site" evidence="1">
    <location>
        <begin position="216"/>
        <end position="217"/>
    </location>
    <ligand>
        <name>1-deoxy-D-xylulose 5-phosphate</name>
        <dbReference type="ChEBI" id="CHEBI:57792"/>
    </ligand>
</feature>